<accession>Q02VU7</accession>
<organism>
    <name type="scientific">Lactococcus lactis subsp. cremoris (strain SK11)</name>
    <dbReference type="NCBI Taxonomy" id="272622"/>
    <lineage>
        <taxon>Bacteria</taxon>
        <taxon>Bacillati</taxon>
        <taxon>Bacillota</taxon>
        <taxon>Bacilli</taxon>
        <taxon>Lactobacillales</taxon>
        <taxon>Streptococcaceae</taxon>
        <taxon>Lactococcus</taxon>
        <taxon>Lactococcus cremoris subsp. cremoris</taxon>
    </lineage>
</organism>
<sequence length="269" mass="31063">MGKITAIKKLKRLYRVDLSDLDEEKIYLCEDTIIHFFITIDKEVSETDLEEILAYDQFAQGKSLALYYISFKMRTGAEVRKYLLEHDINDTDQIEQVLSVLTENNLINDKSYAENFIEGKISMGSSGPYQIKQKLLTKGISNDVLSEALKEIYSEEKQIDVAYKLASKLSRTYGTRLTLKQLKDKIIQNLMNKGFSYSVSSIALDSLELEADEENEMDLLYSELDKVAKRYTKNYEGYERKQKITQALARKGFSYDDISSALRDYTFPE</sequence>
<name>RECX_LACLS</name>
<protein>
    <recommendedName>
        <fullName evidence="1">Regulatory protein RecX</fullName>
    </recommendedName>
</protein>
<comment type="function">
    <text evidence="1">Modulates RecA activity.</text>
</comment>
<comment type="subcellular location">
    <subcellularLocation>
        <location evidence="1">Cytoplasm</location>
    </subcellularLocation>
</comment>
<comment type="similarity">
    <text evidence="1">Belongs to the RecX family.</text>
</comment>
<reference key="1">
    <citation type="journal article" date="2006" name="Proc. Natl. Acad. Sci. U.S.A.">
        <title>Comparative genomics of the lactic acid bacteria.</title>
        <authorList>
            <person name="Makarova K.S."/>
            <person name="Slesarev A."/>
            <person name="Wolf Y.I."/>
            <person name="Sorokin A."/>
            <person name="Mirkin B."/>
            <person name="Koonin E.V."/>
            <person name="Pavlov A."/>
            <person name="Pavlova N."/>
            <person name="Karamychev V."/>
            <person name="Polouchine N."/>
            <person name="Shakhova V."/>
            <person name="Grigoriev I."/>
            <person name="Lou Y."/>
            <person name="Rohksar D."/>
            <person name="Lucas S."/>
            <person name="Huang K."/>
            <person name="Goodstein D.M."/>
            <person name="Hawkins T."/>
            <person name="Plengvidhya V."/>
            <person name="Welker D."/>
            <person name="Hughes J."/>
            <person name="Goh Y."/>
            <person name="Benson A."/>
            <person name="Baldwin K."/>
            <person name="Lee J.-H."/>
            <person name="Diaz-Muniz I."/>
            <person name="Dosti B."/>
            <person name="Smeianov V."/>
            <person name="Wechter W."/>
            <person name="Barabote R."/>
            <person name="Lorca G."/>
            <person name="Altermann E."/>
            <person name="Barrangou R."/>
            <person name="Ganesan B."/>
            <person name="Xie Y."/>
            <person name="Rawsthorne H."/>
            <person name="Tamir D."/>
            <person name="Parker C."/>
            <person name="Breidt F."/>
            <person name="Broadbent J.R."/>
            <person name="Hutkins R."/>
            <person name="O'Sullivan D."/>
            <person name="Steele J."/>
            <person name="Unlu G."/>
            <person name="Saier M.H. Jr."/>
            <person name="Klaenhammer T."/>
            <person name="Richardson P."/>
            <person name="Kozyavkin S."/>
            <person name="Weimer B.C."/>
            <person name="Mills D.A."/>
        </authorList>
    </citation>
    <scope>NUCLEOTIDE SEQUENCE [LARGE SCALE GENOMIC DNA]</scope>
    <source>
        <strain>SK11</strain>
    </source>
</reference>
<evidence type="ECO:0000255" key="1">
    <source>
        <dbReference type="HAMAP-Rule" id="MF_01114"/>
    </source>
</evidence>
<keyword id="KW-0963">Cytoplasm</keyword>
<proteinExistence type="inferred from homology"/>
<gene>
    <name evidence="1" type="primary">recX</name>
    <name type="ordered locus">LACR_2490</name>
</gene>
<dbReference type="EMBL" id="CP000425">
    <property type="protein sequence ID" value="ABJ73925.1"/>
    <property type="molecule type" value="Genomic_DNA"/>
</dbReference>
<dbReference type="RefSeq" id="WP_011677235.1">
    <property type="nucleotide sequence ID" value="NC_008527.1"/>
</dbReference>
<dbReference type="SMR" id="Q02VU7"/>
<dbReference type="KEGG" id="llc:LACR_2490"/>
<dbReference type="HOGENOM" id="CLU_066607_4_0_9"/>
<dbReference type="Proteomes" id="UP000000240">
    <property type="component" value="Chromosome"/>
</dbReference>
<dbReference type="GO" id="GO:0005737">
    <property type="term" value="C:cytoplasm"/>
    <property type="evidence" value="ECO:0007669"/>
    <property type="project" value="UniProtKB-SubCell"/>
</dbReference>
<dbReference type="GO" id="GO:0006282">
    <property type="term" value="P:regulation of DNA repair"/>
    <property type="evidence" value="ECO:0007669"/>
    <property type="project" value="UniProtKB-UniRule"/>
</dbReference>
<dbReference type="Gene3D" id="1.10.10.10">
    <property type="entry name" value="Winged helix-like DNA-binding domain superfamily/Winged helix DNA-binding domain"/>
    <property type="match status" value="4"/>
</dbReference>
<dbReference type="HAMAP" id="MF_01114">
    <property type="entry name" value="RecX"/>
    <property type="match status" value="1"/>
</dbReference>
<dbReference type="InterPro" id="IPR053924">
    <property type="entry name" value="RecX_HTH_2nd"/>
</dbReference>
<dbReference type="InterPro" id="IPR053925">
    <property type="entry name" value="RecX_HTH_3rd"/>
</dbReference>
<dbReference type="InterPro" id="IPR003783">
    <property type="entry name" value="Regulatory_RecX"/>
</dbReference>
<dbReference type="InterPro" id="IPR036388">
    <property type="entry name" value="WH-like_DNA-bd_sf"/>
</dbReference>
<dbReference type="NCBIfam" id="NF010733">
    <property type="entry name" value="PRK14135.1"/>
    <property type="match status" value="1"/>
</dbReference>
<dbReference type="PANTHER" id="PTHR33602">
    <property type="entry name" value="REGULATORY PROTEIN RECX FAMILY PROTEIN"/>
    <property type="match status" value="1"/>
</dbReference>
<dbReference type="PANTHER" id="PTHR33602:SF1">
    <property type="entry name" value="REGULATORY PROTEIN RECX FAMILY PROTEIN"/>
    <property type="match status" value="1"/>
</dbReference>
<dbReference type="Pfam" id="PF02631">
    <property type="entry name" value="RecX_HTH2"/>
    <property type="match status" value="1"/>
</dbReference>
<dbReference type="Pfam" id="PF21981">
    <property type="entry name" value="RecX_HTH3"/>
    <property type="match status" value="2"/>
</dbReference>
<feature type="chain" id="PRO_1000065183" description="Regulatory protein RecX">
    <location>
        <begin position="1"/>
        <end position="269"/>
    </location>
</feature>